<organism>
    <name type="scientific">Staphylococcus saprophyticus subsp. saprophyticus (strain ATCC 15305 / DSM 20229 / NCIMB 8711 / NCTC 7292 / S-41)</name>
    <dbReference type="NCBI Taxonomy" id="342451"/>
    <lineage>
        <taxon>Bacteria</taxon>
        <taxon>Bacillati</taxon>
        <taxon>Bacillota</taxon>
        <taxon>Bacilli</taxon>
        <taxon>Bacillales</taxon>
        <taxon>Staphylococcaceae</taxon>
        <taxon>Staphylococcus</taxon>
    </lineage>
</organism>
<evidence type="ECO:0000255" key="1">
    <source>
        <dbReference type="HAMAP-Rule" id="MF_01033"/>
    </source>
</evidence>
<feature type="chain" id="PRO_0000083760" description="3-isopropylmalate dehydrogenase">
    <location>
        <begin position="1"/>
        <end position="346"/>
    </location>
</feature>
<feature type="binding site" evidence="1">
    <location>
        <begin position="76"/>
        <end position="87"/>
    </location>
    <ligand>
        <name>NAD(+)</name>
        <dbReference type="ChEBI" id="CHEBI:57540"/>
    </ligand>
</feature>
<feature type="binding site" evidence="1">
    <location>
        <position position="94"/>
    </location>
    <ligand>
        <name>substrate</name>
    </ligand>
</feature>
<feature type="binding site" evidence="1">
    <location>
        <position position="104"/>
    </location>
    <ligand>
        <name>substrate</name>
    </ligand>
</feature>
<feature type="binding site" evidence="1">
    <location>
        <position position="132"/>
    </location>
    <ligand>
        <name>substrate</name>
    </ligand>
</feature>
<feature type="binding site" evidence="1">
    <location>
        <position position="217"/>
    </location>
    <ligand>
        <name>Mg(2+)</name>
        <dbReference type="ChEBI" id="CHEBI:18420"/>
    </ligand>
</feature>
<feature type="binding site" evidence="1">
    <location>
        <position position="217"/>
    </location>
    <ligand>
        <name>substrate</name>
    </ligand>
</feature>
<feature type="binding site" evidence="1">
    <location>
        <position position="241"/>
    </location>
    <ligand>
        <name>Mg(2+)</name>
        <dbReference type="ChEBI" id="CHEBI:18420"/>
    </ligand>
</feature>
<feature type="binding site" evidence="1">
    <location>
        <position position="245"/>
    </location>
    <ligand>
        <name>Mg(2+)</name>
        <dbReference type="ChEBI" id="CHEBI:18420"/>
    </ligand>
</feature>
<feature type="binding site" evidence="1">
    <location>
        <begin position="275"/>
        <end position="287"/>
    </location>
    <ligand>
        <name>NAD(+)</name>
        <dbReference type="ChEBI" id="CHEBI:57540"/>
    </ligand>
</feature>
<feature type="site" description="Important for catalysis" evidence="1">
    <location>
        <position position="139"/>
    </location>
</feature>
<feature type="site" description="Important for catalysis" evidence="1">
    <location>
        <position position="185"/>
    </location>
</feature>
<dbReference type="EC" id="1.1.1.85" evidence="1"/>
<dbReference type="EMBL" id="AP008934">
    <property type="protein sequence ID" value="BAE17965.1"/>
    <property type="molecule type" value="Genomic_DNA"/>
</dbReference>
<dbReference type="RefSeq" id="WP_011302711.1">
    <property type="nucleotide sequence ID" value="NZ_MTGA01000028.1"/>
</dbReference>
<dbReference type="SMR" id="Q49Z13"/>
<dbReference type="GeneID" id="66866980"/>
<dbReference type="KEGG" id="ssp:SSP0820"/>
<dbReference type="eggNOG" id="COG0473">
    <property type="taxonomic scope" value="Bacteria"/>
</dbReference>
<dbReference type="HOGENOM" id="CLU_031953_0_3_9"/>
<dbReference type="OrthoDB" id="9806254at2"/>
<dbReference type="UniPathway" id="UPA00048">
    <property type="reaction ID" value="UER00072"/>
</dbReference>
<dbReference type="Proteomes" id="UP000006371">
    <property type="component" value="Chromosome"/>
</dbReference>
<dbReference type="GO" id="GO:0005829">
    <property type="term" value="C:cytosol"/>
    <property type="evidence" value="ECO:0007669"/>
    <property type="project" value="TreeGrafter"/>
</dbReference>
<dbReference type="GO" id="GO:0003862">
    <property type="term" value="F:3-isopropylmalate dehydrogenase activity"/>
    <property type="evidence" value="ECO:0007669"/>
    <property type="project" value="UniProtKB-UniRule"/>
</dbReference>
<dbReference type="GO" id="GO:0000287">
    <property type="term" value="F:magnesium ion binding"/>
    <property type="evidence" value="ECO:0007669"/>
    <property type="project" value="InterPro"/>
</dbReference>
<dbReference type="GO" id="GO:0051287">
    <property type="term" value="F:NAD binding"/>
    <property type="evidence" value="ECO:0007669"/>
    <property type="project" value="InterPro"/>
</dbReference>
<dbReference type="GO" id="GO:0009098">
    <property type="term" value="P:L-leucine biosynthetic process"/>
    <property type="evidence" value="ECO:0007669"/>
    <property type="project" value="UniProtKB-UniRule"/>
</dbReference>
<dbReference type="FunFam" id="3.40.718.10:FF:000006">
    <property type="entry name" value="3-isopropylmalate dehydrogenase"/>
    <property type="match status" value="1"/>
</dbReference>
<dbReference type="Gene3D" id="3.40.718.10">
    <property type="entry name" value="Isopropylmalate Dehydrogenase"/>
    <property type="match status" value="1"/>
</dbReference>
<dbReference type="HAMAP" id="MF_01033">
    <property type="entry name" value="LeuB_type1"/>
    <property type="match status" value="1"/>
</dbReference>
<dbReference type="InterPro" id="IPR019818">
    <property type="entry name" value="IsoCit/isopropylmalate_DH_CS"/>
</dbReference>
<dbReference type="InterPro" id="IPR024084">
    <property type="entry name" value="IsoPropMal-DH-like_dom"/>
</dbReference>
<dbReference type="InterPro" id="IPR004429">
    <property type="entry name" value="Isopropylmalate_DH"/>
</dbReference>
<dbReference type="NCBIfam" id="TIGR00169">
    <property type="entry name" value="leuB"/>
    <property type="match status" value="1"/>
</dbReference>
<dbReference type="PANTHER" id="PTHR42979">
    <property type="entry name" value="3-ISOPROPYLMALATE DEHYDROGENASE"/>
    <property type="match status" value="1"/>
</dbReference>
<dbReference type="PANTHER" id="PTHR42979:SF1">
    <property type="entry name" value="3-ISOPROPYLMALATE DEHYDROGENASE"/>
    <property type="match status" value="1"/>
</dbReference>
<dbReference type="Pfam" id="PF00180">
    <property type="entry name" value="Iso_dh"/>
    <property type="match status" value="1"/>
</dbReference>
<dbReference type="SMART" id="SM01329">
    <property type="entry name" value="Iso_dh"/>
    <property type="match status" value="1"/>
</dbReference>
<dbReference type="SUPFAM" id="SSF53659">
    <property type="entry name" value="Isocitrate/Isopropylmalate dehydrogenase-like"/>
    <property type="match status" value="1"/>
</dbReference>
<dbReference type="PROSITE" id="PS00470">
    <property type="entry name" value="IDH_IMDH"/>
    <property type="match status" value="1"/>
</dbReference>
<name>LEU3_STAS1</name>
<gene>
    <name evidence="1" type="primary">leuB</name>
    <name type="ordered locus">SSP0820</name>
</gene>
<comment type="function">
    <text evidence="1">Catalyzes the oxidation of 3-carboxy-2-hydroxy-4-methylpentanoate (3-isopropylmalate) to 3-carboxy-4-methyl-2-oxopentanoate. The product decarboxylates to 4-methyl-2 oxopentanoate.</text>
</comment>
<comment type="catalytic activity">
    <reaction evidence="1">
        <text>(2R,3S)-3-isopropylmalate + NAD(+) = 4-methyl-2-oxopentanoate + CO2 + NADH</text>
        <dbReference type="Rhea" id="RHEA:32271"/>
        <dbReference type="ChEBI" id="CHEBI:16526"/>
        <dbReference type="ChEBI" id="CHEBI:17865"/>
        <dbReference type="ChEBI" id="CHEBI:35121"/>
        <dbReference type="ChEBI" id="CHEBI:57540"/>
        <dbReference type="ChEBI" id="CHEBI:57945"/>
        <dbReference type="EC" id="1.1.1.85"/>
    </reaction>
</comment>
<comment type="cofactor">
    <cofactor evidence="1">
        <name>Mg(2+)</name>
        <dbReference type="ChEBI" id="CHEBI:18420"/>
    </cofactor>
    <cofactor evidence="1">
        <name>Mn(2+)</name>
        <dbReference type="ChEBI" id="CHEBI:29035"/>
    </cofactor>
    <text evidence="1">Binds 1 Mg(2+) or Mn(2+) ion per subunit.</text>
</comment>
<comment type="pathway">
    <text evidence="1">Amino-acid biosynthesis; L-leucine biosynthesis; L-leucine from 3-methyl-2-oxobutanoate: step 3/4.</text>
</comment>
<comment type="subunit">
    <text evidence="1">Homodimer.</text>
</comment>
<comment type="subcellular location">
    <subcellularLocation>
        <location evidence="1">Cytoplasm</location>
    </subcellularLocation>
</comment>
<comment type="similarity">
    <text evidence="1">Belongs to the isocitrate and isopropylmalate dehydrogenases family. LeuB type 1 subfamily.</text>
</comment>
<accession>Q49Z13</accession>
<reference key="1">
    <citation type="journal article" date="2005" name="Proc. Natl. Acad. Sci. U.S.A.">
        <title>Whole genome sequence of Staphylococcus saprophyticus reveals the pathogenesis of uncomplicated urinary tract infection.</title>
        <authorList>
            <person name="Kuroda M."/>
            <person name="Yamashita A."/>
            <person name="Hirakawa H."/>
            <person name="Kumano M."/>
            <person name="Morikawa K."/>
            <person name="Higashide M."/>
            <person name="Maruyama A."/>
            <person name="Inose Y."/>
            <person name="Matoba K."/>
            <person name="Toh H."/>
            <person name="Kuhara S."/>
            <person name="Hattori M."/>
            <person name="Ohta T."/>
        </authorList>
    </citation>
    <scope>NUCLEOTIDE SEQUENCE [LARGE SCALE GENOMIC DNA]</scope>
    <source>
        <strain>ATCC 15305 / DSM 20229 / NCIMB 8711 / NCTC 7292 / S-41</strain>
    </source>
</reference>
<proteinExistence type="inferred from homology"/>
<keyword id="KW-0028">Amino-acid biosynthesis</keyword>
<keyword id="KW-0100">Branched-chain amino acid biosynthesis</keyword>
<keyword id="KW-0963">Cytoplasm</keyword>
<keyword id="KW-0432">Leucine biosynthesis</keyword>
<keyword id="KW-0460">Magnesium</keyword>
<keyword id="KW-0464">Manganese</keyword>
<keyword id="KW-0479">Metal-binding</keyword>
<keyword id="KW-0520">NAD</keyword>
<keyword id="KW-0560">Oxidoreductase</keyword>
<keyword id="KW-1185">Reference proteome</keyword>
<protein>
    <recommendedName>
        <fullName evidence="1">3-isopropylmalate dehydrogenase</fullName>
        <ecNumber evidence="1">1.1.1.85</ecNumber>
    </recommendedName>
    <alternativeName>
        <fullName evidence="1">3-IPM-DH</fullName>
    </alternativeName>
    <alternativeName>
        <fullName evidence="1">Beta-IPM dehydrogenase</fullName>
        <shortName evidence="1">IMDH</shortName>
    </alternativeName>
</protein>
<sequence>MSYKIVALPGDGIGPEILNGSLEILQQLSKEFHFEYELESHDFGGIAIDNHGKPLPDSTLNACKNADAILLGAVGGPKWTDPNNRPEQGLLGIRKALGLFANIRPTTVTNGTSHLSPIKEERVANTDFILVRELTGGIYFGEPKQLSENDALDSLTYTRDEIERIARVGFELAQKRHKKLTSVDKENVLSSSKLWRNVINEVSQSYPDVEVNHLLVDACAMHLITNPSQFDVIVTENLFGDILSDEASVIPGSLGLSPSASFSEQGPRLYEPIHGSAPDIANQDIANPFGMLLSVAMCLRESLNEDKAADKLENVIYQLIKEGKTTRDLNGNYLTSEIFNYVKENL</sequence>